<reference key="1">
    <citation type="submission" date="2005-03" db="EMBL/GenBank/DDBJ databases">
        <title>Brevibacillus brevis strain 47, complete genome.</title>
        <authorList>
            <person name="Hosoyama A."/>
            <person name="Yamada R."/>
            <person name="Hongo Y."/>
            <person name="Terui Y."/>
            <person name="Ankai A."/>
            <person name="Masuyama W."/>
            <person name="Sekiguchi M."/>
            <person name="Takeda T."/>
            <person name="Asano K."/>
            <person name="Ohji S."/>
            <person name="Ichikawa N."/>
            <person name="Narita S."/>
            <person name="Aoki N."/>
            <person name="Miura H."/>
            <person name="Matsushita S."/>
            <person name="Sekigawa T."/>
            <person name="Yamagata H."/>
            <person name="Yoshikawa H."/>
            <person name="Udaka S."/>
            <person name="Tanikawa S."/>
            <person name="Fujita N."/>
        </authorList>
    </citation>
    <scope>NUCLEOTIDE SEQUENCE [LARGE SCALE GENOMIC DNA]</scope>
    <source>
        <strain>47 / JCM 6285 / NBRC 100599</strain>
    </source>
</reference>
<evidence type="ECO:0000255" key="1">
    <source>
        <dbReference type="HAMAP-Rule" id="MF_00912"/>
    </source>
</evidence>
<evidence type="ECO:0000255" key="2">
    <source>
        <dbReference type="PROSITE-ProRule" id="PRU01115"/>
    </source>
</evidence>
<dbReference type="EMBL" id="AP008955">
    <property type="protein sequence ID" value="BAH44811.1"/>
    <property type="molecule type" value="Genomic_DNA"/>
</dbReference>
<dbReference type="RefSeq" id="WP_015892093.1">
    <property type="nucleotide sequence ID" value="NC_012491.1"/>
</dbReference>
<dbReference type="STRING" id="358681.BBR47_38340"/>
<dbReference type="KEGG" id="bbe:BBR47_38340"/>
<dbReference type="eggNOG" id="COG1589">
    <property type="taxonomic scope" value="Bacteria"/>
</dbReference>
<dbReference type="HOGENOM" id="CLU_046278_2_1_9"/>
<dbReference type="Proteomes" id="UP000001877">
    <property type="component" value="Chromosome"/>
</dbReference>
<dbReference type="GO" id="GO:0032153">
    <property type="term" value="C:cell division site"/>
    <property type="evidence" value="ECO:0007669"/>
    <property type="project" value="UniProtKB-UniRule"/>
</dbReference>
<dbReference type="GO" id="GO:0005886">
    <property type="term" value="C:plasma membrane"/>
    <property type="evidence" value="ECO:0007669"/>
    <property type="project" value="UniProtKB-SubCell"/>
</dbReference>
<dbReference type="GO" id="GO:0043093">
    <property type="term" value="P:FtsZ-dependent cytokinesis"/>
    <property type="evidence" value="ECO:0007669"/>
    <property type="project" value="UniProtKB-UniRule"/>
</dbReference>
<dbReference type="Gene3D" id="3.40.50.10960">
    <property type="match status" value="1"/>
</dbReference>
<dbReference type="Gene3D" id="3.10.20.310">
    <property type="entry name" value="membrane protein fhac"/>
    <property type="match status" value="1"/>
</dbReference>
<dbReference type="HAMAP" id="MF_00912">
    <property type="entry name" value="DivIB"/>
    <property type="match status" value="1"/>
</dbReference>
<dbReference type="InterPro" id="IPR005548">
    <property type="entry name" value="Cell_div_FtsQ/DivIB_C"/>
</dbReference>
<dbReference type="InterPro" id="IPR026580">
    <property type="entry name" value="DivIB"/>
</dbReference>
<dbReference type="InterPro" id="IPR050487">
    <property type="entry name" value="FtsQ_DivIB"/>
</dbReference>
<dbReference type="InterPro" id="IPR034746">
    <property type="entry name" value="POTRA"/>
</dbReference>
<dbReference type="InterPro" id="IPR013685">
    <property type="entry name" value="POTRA_FtsQ_type"/>
</dbReference>
<dbReference type="PANTHER" id="PTHR37820">
    <property type="entry name" value="CELL DIVISION PROTEIN DIVIB"/>
    <property type="match status" value="1"/>
</dbReference>
<dbReference type="PANTHER" id="PTHR37820:SF1">
    <property type="entry name" value="CELL DIVISION PROTEIN FTSQ"/>
    <property type="match status" value="1"/>
</dbReference>
<dbReference type="Pfam" id="PF03799">
    <property type="entry name" value="FtsQ_DivIB_C"/>
    <property type="match status" value="1"/>
</dbReference>
<dbReference type="Pfam" id="PF08478">
    <property type="entry name" value="POTRA_1"/>
    <property type="match status" value="1"/>
</dbReference>
<dbReference type="PROSITE" id="PS51779">
    <property type="entry name" value="POTRA"/>
    <property type="match status" value="1"/>
</dbReference>
<feature type="chain" id="PRO_0000414760" description="Cell division protein DivIB">
    <location>
        <begin position="1"/>
        <end position="264"/>
    </location>
</feature>
<feature type="topological domain" description="Cytoplasmic" evidence="1">
    <location>
        <begin position="1"/>
        <end position="23"/>
    </location>
</feature>
<feature type="transmembrane region" description="Helical" evidence="1">
    <location>
        <begin position="24"/>
        <end position="44"/>
    </location>
</feature>
<feature type="topological domain" description="Extracellular" evidence="1">
    <location>
        <begin position="45"/>
        <end position="264"/>
    </location>
</feature>
<feature type="domain" description="POTRA" evidence="2">
    <location>
        <begin position="46"/>
        <end position="114"/>
    </location>
</feature>
<accession>C0ZGA2</accession>
<sequence>MAVYEERIPQVKQQRPRRRGNRKLVFLLVLFFLTILIIVFIRSPYSKVQEIRVTGNDIYTTEQVITESGLMKDMQFLNVWENSVRNNLKPLEAIKDVTVSRSFPGLITLHITEQKRVAFWSGQDGSRYALLDNGYVLKQVNFAKRVVDRPLISSWASPELLPHLAKSLSKLSPNVLAEISDITLTPTVYDKQRITLYMRDGNEVRSVIYKLDKMMNWYPAIMKQLPPDTKGVLSLFEQPWFIPYGAQGAIPIQEGQEQPQQPQQ</sequence>
<keyword id="KW-0131">Cell cycle</keyword>
<keyword id="KW-0132">Cell division</keyword>
<keyword id="KW-1003">Cell membrane</keyword>
<keyword id="KW-0472">Membrane</keyword>
<keyword id="KW-1185">Reference proteome</keyword>
<keyword id="KW-0812">Transmembrane</keyword>
<keyword id="KW-1133">Transmembrane helix</keyword>
<comment type="function">
    <text evidence="1">Cell division protein that may be involved in stabilizing or promoting the assembly of the division complex.</text>
</comment>
<comment type="subcellular location">
    <subcellularLocation>
        <location evidence="1">Cell membrane</location>
        <topology evidence="1">Single-pass type II membrane protein</topology>
    </subcellularLocation>
    <text evidence="1">Localizes to the division septum.</text>
</comment>
<comment type="similarity">
    <text evidence="1">Belongs to the FtsQ/DivIB family. DivIB subfamily.</text>
</comment>
<gene>
    <name evidence="1" type="primary">divIB</name>
    <name type="ordered locus">BBR47_38340</name>
</gene>
<protein>
    <recommendedName>
        <fullName evidence="1">Cell division protein DivIB</fullName>
    </recommendedName>
</protein>
<proteinExistence type="inferred from homology"/>
<organism>
    <name type="scientific">Brevibacillus brevis (strain 47 / JCM 6285 / NBRC 100599)</name>
    <dbReference type="NCBI Taxonomy" id="358681"/>
    <lineage>
        <taxon>Bacteria</taxon>
        <taxon>Bacillati</taxon>
        <taxon>Bacillota</taxon>
        <taxon>Bacilli</taxon>
        <taxon>Bacillales</taxon>
        <taxon>Paenibacillaceae</taxon>
        <taxon>Brevibacillus</taxon>
    </lineage>
</organism>
<name>DIVIB_BREBN</name>